<protein>
    <recommendedName>
        <fullName evidence="9">High molecular weight rhoptry protein 3</fullName>
    </recommendedName>
</protein>
<name>RCH3_PLAFA</name>
<reference evidence="10" key="1">
    <citation type="journal article" date="2008" name="Mol. Biochem. Parasitol.">
        <title>Diversity and evolution of the rhoph1/clag multigene family of Plasmodium falciparum.</title>
        <authorList>
            <person name="Iriko H."/>
            <person name="Kaneko O."/>
            <person name="Otsuki H."/>
            <person name="Tsuboi T."/>
            <person name="Su X.Z."/>
            <person name="Tanabe K."/>
            <person name="Torii M."/>
        </authorList>
    </citation>
    <scope>NUCLEOTIDE SEQUENCE [MRNA]</scope>
</reference>
<reference evidence="9" key="2">
    <citation type="journal article" date="2017" name="Elife">
        <title>An essential dual-function complex mediates erythrocyte invasion and channel-mediated nutrient uptake in malaria parasites.</title>
        <authorList>
            <person name="Ito D."/>
            <person name="Schureck M.A."/>
            <person name="Desai S.A."/>
        </authorList>
    </citation>
    <scope>FUNCTION</scope>
    <scope>SUBCELLULAR LOCATION</scope>
    <scope>DEVELOPMENTAL STAGE</scope>
    <scope>PROTEOLYTIC CLEAVAGE</scope>
    <scope>DISRUPTION PHENOTYPE</scope>
    <source>
        <strain evidence="7">KC5</strain>
    </source>
</reference>
<reference evidence="11" key="3">
    <citation type="journal article" date="2021" name="Elife">
        <title>Malaria parasites use a soluble RhopH complex for erythrocyte invasion and an integral form for nutrient uptake.</title>
        <authorList>
            <person name="Schureck M.A."/>
            <person name="Darling J.E."/>
            <person name="Merk A."/>
            <person name="Shao J."/>
            <person name="Daggupati G."/>
            <person name="Srinivasan P."/>
            <person name="Olinares P.D.B."/>
            <person name="Rout M.P."/>
            <person name="Chait B.T."/>
            <person name="Wollenberg K."/>
            <person name="Subramaniam S."/>
            <person name="Desai S.A."/>
        </authorList>
    </citation>
    <scope>STRUCTURE BY ELECTRON MICROSCOPY (2.92 ANGSTROMS) IN RHOPH COMPLEX</scope>
    <scope>MASS SPECTROMETRY</scope>
    <scope>IDENTIFICATION IN RHOPH COMPLEX</scope>
    <scope>INTERACTION WITH CLAG3.1/CLAG3.2</scope>
    <scope>SUBCELLULAR LOCATION</scope>
    <scope>DISULFIDE BOND</scope>
    <source>
        <strain evidence="8">KC5</strain>
    </source>
</reference>
<organism evidence="10">
    <name type="scientific">Plasmodium falciparum</name>
    <dbReference type="NCBI Taxonomy" id="5833"/>
    <lineage>
        <taxon>Eukaryota</taxon>
        <taxon>Sar</taxon>
        <taxon>Alveolata</taxon>
        <taxon>Apicomplexa</taxon>
        <taxon>Aconoidasida</taxon>
        <taxon>Haemosporida</taxon>
        <taxon>Plasmodiidae</taxon>
        <taxon>Plasmodium</taxon>
        <taxon>Plasmodium (Laverania)</taxon>
    </lineage>
</organism>
<gene>
    <name evidence="8" type="primary">RhopH3</name>
</gene>
<dbReference type="EMBL" id="AB250808">
    <property type="protein sequence ID" value="BAG09259.1"/>
    <property type="molecule type" value="mRNA"/>
</dbReference>
<dbReference type="PDB" id="7KIY">
    <property type="method" value="EM"/>
    <property type="resolution" value="2.92 A"/>
    <property type="chains" value="C=1-897"/>
</dbReference>
<dbReference type="PDBsum" id="7KIY"/>
<dbReference type="SMR" id="B0M0W2"/>
<dbReference type="TCDB" id="1.A.91.1.1">
    <property type="family name" value="the cytoadherence-linked asexual protein 3,2 of plasmodium falciparum (clag3) family"/>
</dbReference>
<dbReference type="VEuPathDB" id="PlasmoDB:PF3D7_0905400"/>
<dbReference type="VEuPathDB" id="PlasmoDB:Pf7G8-2_000253500"/>
<dbReference type="VEuPathDB" id="PlasmoDB:Pf7G8_090010300"/>
<dbReference type="VEuPathDB" id="PlasmoDB:PfCD01_090009800"/>
<dbReference type="VEuPathDB" id="PlasmoDB:PfDd2_090010700"/>
<dbReference type="VEuPathDB" id="PlasmoDB:PfGA01_090009800"/>
<dbReference type="VEuPathDB" id="PlasmoDB:PfGB4_090010400"/>
<dbReference type="VEuPathDB" id="PlasmoDB:PfGN01_090010300"/>
<dbReference type="VEuPathDB" id="PlasmoDB:PfHB3_090010100"/>
<dbReference type="VEuPathDB" id="PlasmoDB:PfIT_090010100"/>
<dbReference type="VEuPathDB" id="PlasmoDB:PfKE01_090009800"/>
<dbReference type="VEuPathDB" id="PlasmoDB:PfKH01_090009800"/>
<dbReference type="VEuPathDB" id="PlasmoDB:PfKH02_090010200"/>
<dbReference type="VEuPathDB" id="PlasmoDB:PfML01_090009900"/>
<dbReference type="VEuPathDB" id="PlasmoDB:PfNF135_090009100"/>
<dbReference type="VEuPathDB" id="PlasmoDB:PfNF166_090009500"/>
<dbReference type="VEuPathDB" id="PlasmoDB:PfNF54_090010600"/>
<dbReference type="VEuPathDB" id="PlasmoDB:PfSD01_090010500"/>
<dbReference type="VEuPathDB" id="PlasmoDB:PfSN01_090010100"/>
<dbReference type="VEuPathDB" id="PlasmoDB:PfTG01_090009800"/>
<dbReference type="GO" id="GO:0031410">
    <property type="term" value="C:cytoplasmic vesicle"/>
    <property type="evidence" value="ECO:0007669"/>
    <property type="project" value="UniProtKB-KW"/>
</dbReference>
<dbReference type="GO" id="GO:0020002">
    <property type="term" value="C:host cell plasma membrane"/>
    <property type="evidence" value="ECO:0007669"/>
    <property type="project" value="UniProtKB-SubCell"/>
</dbReference>
<dbReference type="GO" id="GO:0016020">
    <property type="term" value="C:membrane"/>
    <property type="evidence" value="ECO:0007669"/>
    <property type="project" value="UniProtKB-KW"/>
</dbReference>
<dbReference type="GO" id="GO:0020008">
    <property type="term" value="C:rhoptry"/>
    <property type="evidence" value="ECO:0007669"/>
    <property type="project" value="UniProtKB-SubCell"/>
</dbReference>
<dbReference type="GO" id="GO:0020005">
    <property type="term" value="C:symbiont-containing vacuole membrane"/>
    <property type="evidence" value="ECO:0007669"/>
    <property type="project" value="UniProtKB-SubCell"/>
</dbReference>
<dbReference type="InterPro" id="IPR054451">
    <property type="entry name" value="RhopH3_C"/>
</dbReference>
<dbReference type="Pfam" id="PF22808">
    <property type="entry name" value="RhopH3_C"/>
    <property type="match status" value="1"/>
</dbReference>
<keyword id="KW-0002">3D-structure</keyword>
<keyword id="KW-0968">Cytoplasmic vesicle</keyword>
<keyword id="KW-1015">Disulfide bond</keyword>
<keyword id="KW-1032">Host cell membrane</keyword>
<keyword id="KW-1043">Host membrane</keyword>
<keyword id="KW-0472">Membrane</keyword>
<keyword id="KW-0597">Phosphoprotein</keyword>
<keyword id="KW-0732">Signal</keyword>
<keyword id="KW-0812">Transmembrane</keyword>
<keyword id="KW-1133">Transmembrane helix</keyword>
<keyword id="KW-0813">Transport</keyword>
<feature type="signal peptide" evidence="3">
    <location>
        <begin position="1"/>
        <end position="24"/>
    </location>
</feature>
<feature type="chain" id="PRO_5002750266" description="High molecular weight rhoptry protein 3" evidence="3">
    <location>
        <begin position="25"/>
        <end position="897"/>
    </location>
</feature>
<feature type="transmembrane region" description="Helical" evidence="3">
    <location>
        <begin position="597"/>
        <end position="615"/>
    </location>
</feature>
<feature type="region of interest" description="Disordered" evidence="4">
    <location>
        <begin position="788"/>
        <end position="845"/>
    </location>
</feature>
<feature type="region of interest" description="Disordered" evidence="4">
    <location>
        <begin position="859"/>
        <end position="897"/>
    </location>
</feature>
<feature type="compositionally biased region" description="Polar residues" evidence="4">
    <location>
        <begin position="792"/>
        <end position="801"/>
    </location>
</feature>
<feature type="compositionally biased region" description="Low complexity" evidence="4">
    <location>
        <begin position="802"/>
        <end position="817"/>
    </location>
</feature>
<feature type="compositionally biased region" description="Basic and acidic residues" evidence="4">
    <location>
        <begin position="820"/>
        <end position="832"/>
    </location>
</feature>
<feature type="compositionally biased region" description="Basic residues" evidence="4">
    <location>
        <begin position="865"/>
        <end position="876"/>
    </location>
</feature>
<feature type="compositionally biased region" description="Basic and acidic residues" evidence="4">
    <location>
        <begin position="877"/>
        <end position="889"/>
    </location>
</feature>
<feature type="modified residue" description="Phosphoserine" evidence="1">
    <location>
        <position position="804"/>
    </location>
</feature>
<feature type="disulfide bond" evidence="6 11">
    <location>
        <begin position="157"/>
        <end position="231"/>
    </location>
</feature>
<feature type="disulfide bond" evidence="6 11">
    <location>
        <begin position="244"/>
        <end position="253"/>
    </location>
</feature>
<feature type="disulfide bond" evidence="6 11">
    <location>
        <begin position="262"/>
        <end position="276"/>
    </location>
</feature>
<feature type="disulfide bond" evidence="2">
    <location>
        <begin position="421"/>
        <end position="620"/>
    </location>
</feature>
<feature type="disulfide bond" evidence="6 11">
    <location>
        <begin position="475"/>
        <end position="536"/>
    </location>
</feature>
<feature type="helix" evidence="12">
    <location>
        <begin position="34"/>
        <end position="48"/>
    </location>
</feature>
<feature type="turn" evidence="12">
    <location>
        <begin position="49"/>
        <end position="51"/>
    </location>
</feature>
<feature type="turn" evidence="12">
    <location>
        <begin position="63"/>
        <end position="65"/>
    </location>
</feature>
<feature type="helix" evidence="12">
    <location>
        <begin position="67"/>
        <end position="76"/>
    </location>
</feature>
<feature type="turn" evidence="12">
    <location>
        <begin position="97"/>
        <end position="101"/>
    </location>
</feature>
<feature type="helix" evidence="12">
    <location>
        <begin position="104"/>
        <end position="111"/>
    </location>
</feature>
<feature type="helix" evidence="12">
    <location>
        <begin position="117"/>
        <end position="134"/>
    </location>
</feature>
<feature type="strand" evidence="12">
    <location>
        <begin position="148"/>
        <end position="150"/>
    </location>
</feature>
<feature type="strand" evidence="12">
    <location>
        <begin position="153"/>
        <end position="156"/>
    </location>
</feature>
<feature type="strand" evidence="12">
    <location>
        <begin position="172"/>
        <end position="175"/>
    </location>
</feature>
<feature type="helix" evidence="12">
    <location>
        <begin position="184"/>
        <end position="186"/>
    </location>
</feature>
<feature type="helix" evidence="12">
    <location>
        <begin position="196"/>
        <end position="202"/>
    </location>
</feature>
<feature type="turn" evidence="12">
    <location>
        <begin position="208"/>
        <end position="210"/>
    </location>
</feature>
<feature type="helix" evidence="12">
    <location>
        <begin position="211"/>
        <end position="221"/>
    </location>
</feature>
<feature type="strand" evidence="12">
    <location>
        <begin position="234"/>
        <end position="236"/>
    </location>
</feature>
<feature type="helix" evidence="12">
    <location>
        <begin position="240"/>
        <end position="243"/>
    </location>
</feature>
<feature type="strand" evidence="12">
    <location>
        <begin position="244"/>
        <end position="247"/>
    </location>
</feature>
<feature type="helix" evidence="12">
    <location>
        <begin position="251"/>
        <end position="258"/>
    </location>
</feature>
<feature type="strand" evidence="12">
    <location>
        <begin position="263"/>
        <end position="265"/>
    </location>
</feature>
<feature type="helix" evidence="12">
    <location>
        <begin position="275"/>
        <end position="283"/>
    </location>
</feature>
<feature type="turn" evidence="12">
    <location>
        <begin position="284"/>
        <end position="286"/>
    </location>
</feature>
<feature type="helix" evidence="12">
    <location>
        <begin position="290"/>
        <end position="297"/>
    </location>
</feature>
<feature type="turn" evidence="12">
    <location>
        <begin position="298"/>
        <end position="300"/>
    </location>
</feature>
<feature type="strand" evidence="12">
    <location>
        <begin position="342"/>
        <end position="344"/>
    </location>
</feature>
<feature type="helix" evidence="12">
    <location>
        <begin position="372"/>
        <end position="376"/>
    </location>
</feature>
<feature type="helix" evidence="12">
    <location>
        <begin position="380"/>
        <end position="383"/>
    </location>
</feature>
<feature type="helix" evidence="12">
    <location>
        <begin position="384"/>
        <end position="391"/>
    </location>
</feature>
<feature type="turn" evidence="12">
    <location>
        <begin position="400"/>
        <end position="402"/>
    </location>
</feature>
<feature type="helix" evidence="12">
    <location>
        <begin position="403"/>
        <end position="406"/>
    </location>
</feature>
<feature type="helix" evidence="12">
    <location>
        <begin position="421"/>
        <end position="423"/>
    </location>
</feature>
<feature type="helix" evidence="12">
    <location>
        <begin position="434"/>
        <end position="453"/>
    </location>
</feature>
<feature type="helix" evidence="12">
    <location>
        <begin position="472"/>
        <end position="491"/>
    </location>
</feature>
<feature type="helix" evidence="12">
    <location>
        <begin position="504"/>
        <end position="513"/>
    </location>
</feature>
<feature type="helix" evidence="12">
    <location>
        <begin position="515"/>
        <end position="517"/>
    </location>
</feature>
<feature type="strand" evidence="12">
    <location>
        <begin position="527"/>
        <end position="529"/>
    </location>
</feature>
<feature type="helix" evidence="12">
    <location>
        <begin position="530"/>
        <end position="535"/>
    </location>
</feature>
<feature type="turn" evidence="12">
    <location>
        <begin position="540"/>
        <end position="542"/>
    </location>
</feature>
<feature type="helix" evidence="12">
    <location>
        <begin position="543"/>
        <end position="547"/>
    </location>
</feature>
<feature type="strand" evidence="12">
    <location>
        <begin position="552"/>
        <end position="554"/>
    </location>
</feature>
<feature type="helix" evidence="12">
    <location>
        <begin position="563"/>
        <end position="569"/>
    </location>
</feature>
<feature type="helix" evidence="12">
    <location>
        <begin position="578"/>
        <end position="590"/>
    </location>
</feature>
<feature type="helix" evidence="12">
    <location>
        <begin position="596"/>
        <end position="619"/>
    </location>
</feature>
<feature type="helix" evidence="12">
    <location>
        <begin position="623"/>
        <end position="629"/>
    </location>
</feature>
<feature type="helix" evidence="12">
    <location>
        <begin position="630"/>
        <end position="632"/>
    </location>
</feature>
<feature type="helix" evidence="12">
    <location>
        <begin position="636"/>
        <end position="650"/>
    </location>
</feature>
<feature type="strand" evidence="12">
    <location>
        <begin position="651"/>
        <end position="655"/>
    </location>
</feature>
<feature type="helix" evidence="12">
    <location>
        <begin position="656"/>
        <end position="665"/>
    </location>
</feature>
<feature type="turn" evidence="12">
    <location>
        <begin position="668"/>
        <end position="671"/>
    </location>
</feature>
<feature type="helix" evidence="12">
    <location>
        <begin position="673"/>
        <end position="689"/>
    </location>
</feature>
<feature type="turn" evidence="12">
    <location>
        <begin position="690"/>
        <end position="693"/>
    </location>
</feature>
<sequence length="897" mass="104856">MRSKHLVTLFIITFLSFSTVKVWGKDVFAGFVTKKLKTLLDCNFALYYNFKGNGPDAGSFLDFVDEPEQFYWFVEHFLSVKFRVPKHLKDKNIHNFTPCLNRSWVSEFLKEYEEPFVNPVMKFLDKEQRLFFTYNFGDVEPQGKYTYFPVKEFHKYCILPPLIKTNIKDGESGEFLKYQLNKEEYKVFLSSVGSQMTAIKNLYSTVEDEQRKQLLKVIIENESTNDISVQCPTYNIKLHYTKECANSNNILKCIDEFLRKTCEKKTESKHPSADLCEHLQFLFESLKNPYLDNFKKFMTNSDFTLIKPQSVWNVPIFDIYKPKNYLDSVQNLDTECFKKLNSKNLIFLSFHDDIPNNPYYNVELQEIVKLSTYTYSIFDKLYNFFFVFKKSGAPISPVSVKELSHNITDFSFKEDNSEIQCQNVRKSLDLEVDVETMKGIAAEKLCKIIEKFILTKDDASKPEKSDIHRGFRILCILISTHVEAYNIVRQLLNMESMISLTRYTSLYIHKFFKSVTLLKGNFLYKNNKAIRYSRACSKASLHVPSVLYRRNIYIPETFLSLYLGLSNLVSSNPSSPFFEYAIIEFLVTYYNKGSEKFVLYFISIISVLYINEYYYEQLSCFYPKEFELIKSRMIHPNIVDRILKGIDNLMKSTRYDKMRTMYLDFESSDIFSREKVFTALYNFDSFIKTNEQLKKKNLEEISEIPVQLETSNDGIGYRKQDVLYETDKPQTMDEASYEETVDEDAHHVNEKQHSAHFLDAIAEKDILEEKTKDQDLEIELYKYMGPLKEQSKSTSAASTSDELSGSEGPSTESTSTGNQGEDKTTDNTYKEMEELEEAEGTSNLKKGLEFYKSSLKLDQLDKEKPKKKKSKRKKKRDSSSDRILLEESKTFTSENEL</sequence>
<proteinExistence type="evidence at protein level"/>
<evidence type="ECO:0000250" key="1">
    <source>
        <dbReference type="UniProtKB" id="Q8I395"/>
    </source>
</evidence>
<evidence type="ECO:0000250" key="2">
    <source>
        <dbReference type="UniProtKB" id="W7JUX6"/>
    </source>
</evidence>
<evidence type="ECO:0000255" key="3"/>
<evidence type="ECO:0000256" key="4">
    <source>
        <dbReference type="SAM" id="MobiDB-lite"/>
    </source>
</evidence>
<evidence type="ECO:0000269" key="5">
    <source>
    </source>
</evidence>
<evidence type="ECO:0000269" key="6">
    <source>
    </source>
</evidence>
<evidence type="ECO:0000303" key="7">
    <source>
    </source>
</evidence>
<evidence type="ECO:0000303" key="8">
    <source>
    </source>
</evidence>
<evidence type="ECO:0000305" key="9"/>
<evidence type="ECO:0000312" key="10">
    <source>
        <dbReference type="EMBL" id="BAG09259.1"/>
    </source>
</evidence>
<evidence type="ECO:0007744" key="11">
    <source>
        <dbReference type="PDB" id="7KIY"/>
    </source>
</evidence>
<evidence type="ECO:0007829" key="12">
    <source>
        <dbReference type="PDB" id="7KIY"/>
    </source>
</evidence>
<comment type="function">
    <text evidence="1 5">Participates in the formation of new permeability pathways in Plasmodium-infected erythrocytes enabling the uptake of nutrients from the blood plasma (PubMed:28221136). Required for maintaining invasion capacity of merozoites (PubMed:28221136). Required for the trophozoite to schizont developmental transition of the intracellular parasite (By similarity).</text>
</comment>
<comment type="subunit">
    <text evidence="1 6">Component of the RhopH complex, composed of CLAG3.1/CLAG3.2, RhopH2 and RhopH3 with a 1:1:1 subunit stoichiometry (PubMed:33393463). Interacts with CLAG3.1/CLAG3.2 (PubMed:33393463). Interacts with CDPK1; the interaction promotes RhopH3 phosphorylation in merozoites (By similarity).</text>
</comment>
<comment type="subcellular location">
    <subcellularLocation>
        <location evidence="5 6">Host cell membrane</location>
        <topology evidence="3">Single-pass membrane protein</topology>
    </subcellularLocation>
    <subcellularLocation>
        <location evidence="5 6">Host cell membrane</location>
        <topology evidence="5">Peripheral membrane protein</topology>
    </subcellularLocation>
    <subcellularLocation>
        <location evidence="5">Parasitophorous vacuole membrane</location>
        <topology evidence="3">Single-pass membrane protein</topology>
    </subcellularLocation>
    <subcellularLocation>
        <location evidence="5">Cytoplasmic vesicle</location>
        <location evidence="5">Secretory vesicle</location>
        <location evidence="5">Rhoptry</location>
    </subcellularLocation>
    <text evidence="5">Export to host cytosol is mediated by the Plasmodium translocon of exported proteins (PTEX) complex.</text>
</comment>
<comment type="developmental stage">
    <text evidence="5">Expressed in ring-stage parasites (at protein level) (PubMed:28221136). Expressed in trophozoites (at protein level) (PubMed:28221136). Expressed in schizonts (at protein level) (PubMed:28221136).</text>
</comment>
<comment type="PTM">
    <text evidence="5">Proteolytically cleaved near C-terminus.</text>
</comment>
<comment type="disruption phenotype">
    <text evidence="5">Knockouts are not viable, suggesting an essential role in asexual blood stages (PubMed:28221136). Conditional knockdown results in co-depletion of CLAG3.2 in schizonts (PubMed:28221136). Mislocalization of RhopH2 in schizonts (PubMed:28221136). Decreased number of ring-infected cells due to the defects in merozoite invasion capacity (PubMed:28221136). No significant effects on merozoite numbers, maturation and egress (PubMed:28221136). Co-depletion of CLAG3.2 and RhopH2 in trophozoites (PubMed:28221136). Resistance of infected erythrocytes to sorbitol lysis, indicating defects in the formation of new permeability pathways (PubMed:28221136). No significant effects on the activities of parasitophorous vacuole (PubMed:28221136).</text>
</comment>
<accession>B0M0W2</accession>